<reference key="1">
    <citation type="journal article" date="2000" name="J. Mol. Evol.">
        <title>The structure and gene repertoire of an ancient red algal plastid genome.</title>
        <authorList>
            <person name="Gloeckner G."/>
            <person name="Rosenthal A."/>
            <person name="Valentin K.-U."/>
        </authorList>
    </citation>
    <scope>NUCLEOTIDE SEQUENCE [LARGE SCALE GENOMIC DNA]</scope>
    <source>
        <strain>RK-1</strain>
    </source>
</reference>
<name>PSBC_CYACA</name>
<protein>
    <recommendedName>
        <fullName evidence="1">Photosystem II CP43 reaction center protein</fullName>
    </recommendedName>
    <alternativeName>
        <fullName evidence="1">PSII 43 kDa protein</fullName>
    </alternativeName>
    <alternativeName>
        <fullName evidence="1">Protein CP-43</fullName>
    </alternativeName>
</protein>
<feature type="chain" id="PRO_0000077511" description="Photosystem II CP43 reaction center protein" evidence="1">
    <location>
        <begin position="1"/>
        <end position="460"/>
    </location>
</feature>
<feature type="propeptide" id="PRO_0000458867" evidence="1">
    <location>
        <position position="1"/>
    </location>
</feature>
<feature type="transmembrane region" description="Helical" evidence="1">
    <location>
        <begin position="56"/>
        <end position="80"/>
    </location>
</feature>
<feature type="transmembrane region" description="Helical" evidence="1">
    <location>
        <begin position="121"/>
        <end position="142"/>
    </location>
</feature>
<feature type="transmembrane region" description="Helical" evidence="1">
    <location>
        <begin position="165"/>
        <end position="187"/>
    </location>
</feature>
<feature type="transmembrane region" description="Helical" evidence="1">
    <location>
        <begin position="242"/>
        <end position="262"/>
    </location>
</feature>
<feature type="transmembrane region" description="Helical" evidence="1">
    <location>
        <begin position="278"/>
        <end position="299"/>
    </location>
</feature>
<feature type="transmembrane region" description="Helical" evidence="1">
    <location>
        <begin position="434"/>
        <end position="458"/>
    </location>
</feature>
<feature type="binding site" evidence="1">
    <location>
        <position position="354"/>
    </location>
    <ligand>
        <name>[CaMn4O5] cluster</name>
        <dbReference type="ChEBI" id="CHEBI:189552"/>
    </ligand>
</feature>
<organism>
    <name type="scientific">Cyanidium caldarium</name>
    <name type="common">Red alga</name>
    <dbReference type="NCBI Taxonomy" id="2771"/>
    <lineage>
        <taxon>Eukaryota</taxon>
        <taxon>Rhodophyta</taxon>
        <taxon>Bangiophyceae</taxon>
        <taxon>Cyanidiales</taxon>
        <taxon>Cyanidiaceae</taxon>
        <taxon>Cyanidium</taxon>
    </lineage>
</organism>
<evidence type="ECO:0000255" key="1">
    <source>
        <dbReference type="HAMAP-Rule" id="MF_01496"/>
    </source>
</evidence>
<evidence type="ECO:0000305" key="2"/>
<accession>Q9TM46</accession>
<gene>
    <name evidence="1" type="primary">psbC</name>
</gene>
<dbReference type="EMBL" id="AF022186">
    <property type="protein sequence ID" value="AAF13025.1"/>
    <property type="molecule type" value="Genomic_DNA"/>
</dbReference>
<dbReference type="RefSeq" id="NP_045020.2">
    <property type="nucleotide sequence ID" value="NC_001840.1"/>
</dbReference>
<dbReference type="PDB" id="4YUU">
    <property type="method" value="X-ray"/>
    <property type="resolution" value="2.77 A"/>
    <property type="chains" value="C1/C2/c1/c2=1-460"/>
</dbReference>
<dbReference type="PDBsum" id="4YUU"/>
<dbReference type="SMR" id="Q9TM46"/>
<dbReference type="GeneID" id="800249"/>
<dbReference type="GO" id="GO:0009535">
    <property type="term" value="C:chloroplast thylakoid membrane"/>
    <property type="evidence" value="ECO:0007669"/>
    <property type="project" value="UniProtKB-SubCell"/>
</dbReference>
<dbReference type="GO" id="GO:0009523">
    <property type="term" value="C:photosystem II"/>
    <property type="evidence" value="ECO:0007669"/>
    <property type="project" value="UniProtKB-KW"/>
</dbReference>
<dbReference type="GO" id="GO:0016168">
    <property type="term" value="F:chlorophyll binding"/>
    <property type="evidence" value="ECO:0007669"/>
    <property type="project" value="UniProtKB-UniRule"/>
</dbReference>
<dbReference type="GO" id="GO:0045156">
    <property type="term" value="F:electron transporter, transferring electrons within the cyclic electron transport pathway of photosynthesis activity"/>
    <property type="evidence" value="ECO:0007669"/>
    <property type="project" value="InterPro"/>
</dbReference>
<dbReference type="GO" id="GO:0046872">
    <property type="term" value="F:metal ion binding"/>
    <property type="evidence" value="ECO:0007669"/>
    <property type="project" value="UniProtKB-KW"/>
</dbReference>
<dbReference type="GO" id="GO:0009772">
    <property type="term" value="P:photosynthetic electron transport in photosystem II"/>
    <property type="evidence" value="ECO:0007669"/>
    <property type="project" value="InterPro"/>
</dbReference>
<dbReference type="FunFam" id="1.10.10.670:FF:000001">
    <property type="entry name" value="Photosystem II CP43 reaction center protein"/>
    <property type="match status" value="1"/>
</dbReference>
<dbReference type="Gene3D" id="1.10.10.670">
    <property type="entry name" value="photosystem ii from thermosynechococcus elongatus"/>
    <property type="match status" value="1"/>
</dbReference>
<dbReference type="HAMAP" id="MF_01496">
    <property type="entry name" value="PSII_PsbC_CP43"/>
    <property type="match status" value="1"/>
</dbReference>
<dbReference type="InterPro" id="IPR000932">
    <property type="entry name" value="PS_antenna-like"/>
</dbReference>
<dbReference type="InterPro" id="IPR036001">
    <property type="entry name" value="PS_II_antenna-like_sf"/>
</dbReference>
<dbReference type="InterPro" id="IPR005869">
    <property type="entry name" value="PSII_PsbC"/>
</dbReference>
<dbReference type="InterPro" id="IPR044900">
    <property type="entry name" value="PSII_PsbC_sf"/>
</dbReference>
<dbReference type="NCBIfam" id="TIGR01153">
    <property type="entry name" value="psbC"/>
    <property type="match status" value="1"/>
</dbReference>
<dbReference type="Pfam" id="PF00421">
    <property type="entry name" value="PSII"/>
    <property type="match status" value="1"/>
</dbReference>
<dbReference type="SUPFAM" id="SSF161077">
    <property type="entry name" value="Photosystem II antenna protein-like"/>
    <property type="match status" value="1"/>
</dbReference>
<comment type="function">
    <text evidence="1">One of the components of the core complex of photosystem II (PSII). It binds chlorophyll and helps catalyze the primary light-induced photochemical processes of PSII. PSII is a light-driven water:plastoquinone oxidoreductase, using light energy to abstract electrons from H(2)O, generating O(2) and a proton gradient subsequently used for ATP formation.</text>
</comment>
<comment type="cofactor">
    <text evidence="1">Binds multiple chlorophylls and provides some of the ligands for the Ca-4Mn-5O cluster of the oxygen-evolving complex. It may also provide a ligand for a Cl- that is required for oxygen evolution. PSII binds additional chlorophylls, carotenoids and specific lipids.</text>
</comment>
<comment type="subunit">
    <text evidence="2">PSII is composed of 1 copy each of membrane proteins PsbA, PsbB, PsbC, PsbD, PsbE, PsbF, PsbH, PsbI, PsbJ, PsbK, PsbL, PsbM, PsbT, PsbY, PsbZ, Psb30/Ycf12, at least 3 peripheral proteins of the oxygen-evolving complex and a large number of cofactors. It forms dimeric complexes.</text>
</comment>
<comment type="subcellular location">
    <subcellularLocation>
        <location evidence="1">Plastid</location>
        <location evidence="1">Chloroplast thylakoid membrane</location>
        <topology evidence="1">Multi-pass membrane protein</topology>
    </subcellularLocation>
</comment>
<comment type="similarity">
    <text evidence="1">Belongs to the PsbB/PsbC family. PsbC subfamily.</text>
</comment>
<sequence>MLFNKDKNNIGGRSIESTGFAWWSGNARLINLSGKLLGAHVAHAGLIVFWTGAMTLFETSHFIPEKPLYEQGMILLPHLATLGWGVAPGGEIVNTYPYFATGVIHLVSSAVLGFGGIYHSIVGPDVLEDSFSFFGYDWRDKNKMTTILGIHLILLGIGAFLLVIKALFIGGIYDTWAPGGGDIRFITNPTLNPAIIFSYLLKSPFGGEGWIVGVNNMEDVIGGHIWIGVTCVIGGIWHILTRPFSWARRAFVWSGEAYLSYSLGALALMGQTAAEYAWYNNTVYPSEFYGPTAAEASQAQAFTFLVRDQRLGANIASTQGPTGLGKYLMRSPTGEVILGGETMRFWDLRAPWLEPLRSSNGLDLNKIKNDIQPWQERRAAEYMTHAPLGSLNSVGGVATEINSVNYVSPRSWLTTSHFFLGFFIFIGHLWHAGRARAAAAGFEKGINRENEPVLSMRPLD</sequence>
<keyword id="KW-0002">3D-structure</keyword>
<keyword id="KW-0148">Chlorophyll</keyword>
<keyword id="KW-0150">Chloroplast</keyword>
<keyword id="KW-0157">Chromophore</keyword>
<keyword id="KW-0464">Manganese</keyword>
<keyword id="KW-0472">Membrane</keyword>
<keyword id="KW-0479">Metal-binding</keyword>
<keyword id="KW-0602">Photosynthesis</keyword>
<keyword id="KW-0604">Photosystem II</keyword>
<keyword id="KW-0934">Plastid</keyword>
<keyword id="KW-0793">Thylakoid</keyword>
<keyword id="KW-0812">Transmembrane</keyword>
<keyword id="KW-1133">Transmembrane helix</keyword>
<proteinExistence type="evidence at protein level"/>
<geneLocation type="chloroplast"/>